<gene>
    <name type="primary">SLC18A1</name>
    <name type="synonym">VAT1</name>
    <name type="synonym">VMAT1</name>
</gene>
<keyword id="KW-0002">3D-structure</keyword>
<keyword id="KW-0025">Alternative splicing</keyword>
<keyword id="KW-0968">Cytoplasmic vesicle</keyword>
<keyword id="KW-0256">Endoplasmic reticulum</keyword>
<keyword id="KW-0325">Glycoprotein</keyword>
<keyword id="KW-0472">Membrane</keyword>
<keyword id="KW-0532">Neurotransmitter transport</keyword>
<keyword id="KW-1267">Proteomics identification</keyword>
<keyword id="KW-1185">Reference proteome</keyword>
<keyword id="KW-0770">Synapse</keyword>
<keyword id="KW-0812">Transmembrane</keyword>
<keyword id="KW-1133">Transmembrane helix</keyword>
<keyword id="KW-0813">Transport</keyword>
<proteinExistence type="evidence at protein level"/>
<reference key="1">
    <citation type="journal article" date="1996" name="Proc. Natl. Acad. Sci. U.S.A.">
        <title>Distinct pharmacological properties and distribution in neurons and endocrine cells of two isoforms of the human vesicular monoamine transporter.</title>
        <authorList>
            <person name="Erickson J.D."/>
            <person name="Schaefer M.K.-H."/>
            <person name="Bonner T.I."/>
            <person name="Eiden L.E."/>
            <person name="Weihe E."/>
        </authorList>
    </citation>
    <scope>NUCLEOTIDE SEQUENCE [MRNA] (ISOFORM 1)</scope>
    <scope>FUNCTION (ISOFORM 1)</scope>
    <scope>TRANSPORT ACTIVITY (ISOFORM 1)</scope>
    <scope>ACTIVITY REGULATION (ISOFORM 1)</scope>
    <scope>BIOPHYSICOCHEMICAL PROPERTIES (ISOFORM 1)</scope>
    <scope>SUBCELLULAR LOCATION</scope>
    <scope>TISSUE SPECIFICITY</scope>
    <source>
        <tissue>Pheochromocytoma</tissue>
    </source>
</reference>
<reference key="2">
    <citation type="journal article" date="2006" name="Nature">
        <title>DNA sequence and analysis of human chromosome 8.</title>
        <authorList>
            <person name="Nusbaum C."/>
            <person name="Mikkelsen T.S."/>
            <person name="Zody M.C."/>
            <person name="Asakawa S."/>
            <person name="Taudien S."/>
            <person name="Garber M."/>
            <person name="Kodira C.D."/>
            <person name="Schueler M.G."/>
            <person name="Shimizu A."/>
            <person name="Whittaker C.A."/>
            <person name="Chang J.L."/>
            <person name="Cuomo C.A."/>
            <person name="Dewar K."/>
            <person name="FitzGerald M.G."/>
            <person name="Yang X."/>
            <person name="Allen N.R."/>
            <person name="Anderson S."/>
            <person name="Asakawa T."/>
            <person name="Blechschmidt K."/>
            <person name="Bloom T."/>
            <person name="Borowsky M.L."/>
            <person name="Butler J."/>
            <person name="Cook A."/>
            <person name="Corum B."/>
            <person name="DeArellano K."/>
            <person name="DeCaprio D."/>
            <person name="Dooley K.T."/>
            <person name="Dorris L. III"/>
            <person name="Engels R."/>
            <person name="Gloeckner G."/>
            <person name="Hafez N."/>
            <person name="Hagopian D.S."/>
            <person name="Hall J.L."/>
            <person name="Ishikawa S.K."/>
            <person name="Jaffe D.B."/>
            <person name="Kamat A."/>
            <person name="Kudoh J."/>
            <person name="Lehmann R."/>
            <person name="Lokitsang T."/>
            <person name="Macdonald P."/>
            <person name="Major J.E."/>
            <person name="Matthews C.D."/>
            <person name="Mauceli E."/>
            <person name="Menzel U."/>
            <person name="Mihalev A.H."/>
            <person name="Minoshima S."/>
            <person name="Murayama Y."/>
            <person name="Naylor J.W."/>
            <person name="Nicol R."/>
            <person name="Nguyen C."/>
            <person name="O'Leary S.B."/>
            <person name="O'Neill K."/>
            <person name="Parker S.C.J."/>
            <person name="Polley A."/>
            <person name="Raymond C.K."/>
            <person name="Reichwald K."/>
            <person name="Rodriguez J."/>
            <person name="Sasaki T."/>
            <person name="Schilhabel M."/>
            <person name="Siddiqui R."/>
            <person name="Smith C.L."/>
            <person name="Sneddon T.P."/>
            <person name="Talamas J.A."/>
            <person name="Tenzin P."/>
            <person name="Topham K."/>
            <person name="Venkataraman V."/>
            <person name="Wen G."/>
            <person name="Yamazaki S."/>
            <person name="Young S.K."/>
            <person name="Zeng Q."/>
            <person name="Zimmer A.R."/>
            <person name="Rosenthal A."/>
            <person name="Birren B.W."/>
            <person name="Platzer M."/>
            <person name="Shimizu N."/>
            <person name="Lander E.S."/>
        </authorList>
    </citation>
    <scope>NUCLEOTIDE SEQUENCE [LARGE SCALE GENOMIC DNA]</scope>
</reference>
<reference key="3">
    <citation type="journal article" date="2004" name="Genome Res.">
        <title>The status, quality, and expansion of the NIH full-length cDNA project: the Mammalian Gene Collection (MGC).</title>
        <authorList>
            <consortium name="The MGC Project Team"/>
        </authorList>
    </citation>
    <scope>NUCLEOTIDE SEQUENCE [LARGE SCALE MRNA] (ISOFORM 3)</scope>
    <scope>VARIANTS PRO-4 AND THR-136</scope>
    <source>
        <tissue>Brain</tissue>
    </source>
</reference>
<reference key="4">
    <citation type="journal article" date="2005" name="J. Mol. Endocrinol.">
        <title>Identification and characterization of a novel splicing variant of vesicular monoamine transporter 1.</title>
        <authorList>
            <person name="Essand M."/>
            <person name="Vikman S."/>
            <person name="Grawe J."/>
            <person name="Gedda L."/>
            <person name="Hellberg C."/>
            <person name="Oberg K."/>
            <person name="Totterman T.H."/>
            <person name="Giandomenico V."/>
        </authorList>
    </citation>
    <scope>NUCLEOTIDE SEQUENCE [MRNA] OF 445-472 (ISOFORM 2)</scope>
    <scope>ALTERNATIVE SPLICING</scope>
    <scope>FUNCTION (ISOFORMS 1 AND 2)</scope>
    <scope>TRANSPORT ACTIVITY (ISOFORM 1)</scope>
    <scope>SUBCELLULAR LOCATION (ISOFORMS 1 AND 2)</scope>
    <scope>TISSUE SPECIFICITY (ISOFORMS 1 AND 2)</scope>
</reference>
<reference key="5">
    <citation type="journal article" date="2014" name="Mol. Psychiatry">
        <title>Functional genetic variants in the vesicular monoamine transporter 1 modulate emotion processing.</title>
        <authorList>
            <person name="Lohoff F.W."/>
            <person name="Hodge R."/>
            <person name="Narasimhan S."/>
            <person name="Nall A."/>
            <person name="Ferraro T.N."/>
            <person name="Mickey B.J."/>
            <person name="Heitzeg M.M."/>
            <person name="Langenecker S.A."/>
            <person name="Zubieta J.K."/>
            <person name="Bogdan R."/>
            <person name="Nikolova Y.S."/>
            <person name="Drabant E."/>
            <person name="Hariri A.R."/>
            <person name="Bevilacqua L."/>
            <person name="Goldman D."/>
            <person name="Doyle G.A."/>
        </authorList>
    </citation>
    <scope>FUNCTION (ISOFORM 1)</scope>
    <scope>TRANSPORT ACTIVITY (ISOFORM 1)</scope>
    <scope>TISSUE SPECIFICITY</scope>
    <scope>VARIANTS PRO-4; ARG-10; SER-84; THR-98; PRO-101; THR-136; LEU-138 AND VAL-392</scope>
</reference>
<sequence length="525" mass="56257">MLRTILDAPQRLLKEGRASRQLVLVVVFVALLLDNMLFTVVVPIVPTFLYDMEFKEVNSSLHLGHAGSSPHALASPAFSTIFSFFNNNTVAVEESVPSGIAWMNDTASTIPPPATEAISAHKNNCLQGTGFLEEEITRVGVLFASKAVMQLLVNPFVGPLTNRIGYHIPMFAGFVIMFLSTVMFAFSGTYTLLFVARTLQGIGSSFSSVAGLGMLASVYTDDHERGRAMGTALGGLALGLLVGAPFGSVMYEFVGKSAPFLILAFLALLDGALQLCILQPSKVSPESAKGTPLFMLLKDPYILVAAGSICFANMGVAILEPTLPIWMMQTMCSPKWQLGLAFLPASVSYLIGTNLFGVLANKMGRWLCSLIGMLVVGTSLLCVPLAHNIFGLIGPNAGLGLAIGMVDSSMMPIMGHLVDLRHTSVYGSVYAIADVAFCMGFAIGPSTGGAIVKAIGFPWLMVITGVINIVYAPLCYYLRSPPAKEEKLAILSQDCPMETRMYATQKPTKEFPLGEDSDEEPDHEE</sequence>
<name>VMAT1_HUMAN</name>
<accession>P54219</accession>
<accession>E9PDJ5</accession>
<accession>Q9BRE4</accession>
<protein>
    <recommendedName>
        <fullName>Chromaffin granule amine transporter</fullName>
    </recommendedName>
    <alternativeName>
        <fullName>Solute carrier family 18 member 1</fullName>
    </alternativeName>
    <alternativeName>
        <fullName>Vesicular amine transporter 1</fullName>
        <shortName>VAT1</shortName>
    </alternativeName>
</protein>
<dbReference type="EMBL" id="U39905">
    <property type="protein sequence ID" value="AAC50472.1"/>
    <property type="molecule type" value="mRNA"/>
</dbReference>
<dbReference type="EMBL" id="AC025853">
    <property type="status" value="NOT_ANNOTATED_CDS"/>
    <property type="molecule type" value="Genomic_DNA"/>
</dbReference>
<dbReference type="EMBL" id="BC006317">
    <property type="protein sequence ID" value="AAH06317.1"/>
    <property type="molecule type" value="mRNA"/>
</dbReference>
<dbReference type="CCDS" id="CCDS47814.1">
    <molecule id="P54219-3"/>
</dbReference>
<dbReference type="CCDS" id="CCDS47815.1">
    <molecule id="P54219-2"/>
</dbReference>
<dbReference type="CCDS" id="CCDS6013.1">
    <molecule id="P54219-1"/>
</dbReference>
<dbReference type="RefSeq" id="NP_001129163.1">
    <molecule id="P54219-1"/>
    <property type="nucleotide sequence ID" value="NM_001135691.3"/>
</dbReference>
<dbReference type="RefSeq" id="NP_001135796.1">
    <molecule id="P54219-3"/>
    <property type="nucleotide sequence ID" value="NM_001142324.2"/>
</dbReference>
<dbReference type="RefSeq" id="NP_001135797.1">
    <molecule id="P54219-2"/>
    <property type="nucleotide sequence ID" value="NM_001142325.2"/>
</dbReference>
<dbReference type="RefSeq" id="NP_003044.1">
    <molecule id="P54219-1"/>
    <property type="nucleotide sequence ID" value="NM_003053.4"/>
</dbReference>
<dbReference type="RefSeq" id="XP_011542928.1">
    <molecule id="P54219-3"/>
    <property type="nucleotide sequence ID" value="XM_011544626.2"/>
</dbReference>
<dbReference type="RefSeq" id="XP_011542929.1">
    <property type="nucleotide sequence ID" value="XM_011544627.1"/>
</dbReference>
<dbReference type="PDB" id="8TGG">
    <property type="method" value="EM"/>
    <property type="resolution" value="3.60 A"/>
    <property type="chains" value="A/B=1-525"/>
</dbReference>
<dbReference type="PDB" id="8TGH">
    <property type="method" value="EM"/>
    <property type="resolution" value="3.50 A"/>
    <property type="chains" value="A/B=1-525"/>
</dbReference>
<dbReference type="PDB" id="8TGI">
    <property type="method" value="EM"/>
    <property type="resolution" value="3.40 A"/>
    <property type="chains" value="A/B=1-525"/>
</dbReference>
<dbReference type="PDB" id="8TGJ">
    <property type="method" value="EM"/>
    <property type="resolution" value="3.50 A"/>
    <property type="chains" value="A/B=1-525"/>
</dbReference>
<dbReference type="PDB" id="8TGK">
    <property type="method" value="EM"/>
    <property type="resolution" value="3.70 A"/>
    <property type="chains" value="A/B=1-525"/>
</dbReference>
<dbReference type="PDB" id="8TGL">
    <property type="method" value="EM"/>
    <property type="resolution" value="3.40 A"/>
    <property type="chains" value="A/B=1-525"/>
</dbReference>
<dbReference type="PDB" id="8TGM">
    <property type="method" value="EM"/>
    <property type="resolution" value="3.50 A"/>
    <property type="chains" value="A/B=1-525"/>
</dbReference>
<dbReference type="PDB" id="8TGN">
    <property type="method" value="EM"/>
    <property type="resolution" value="3.30 A"/>
    <property type="chains" value="A/B=1-525"/>
</dbReference>
<dbReference type="PDBsum" id="8TGG"/>
<dbReference type="PDBsum" id="8TGH"/>
<dbReference type="PDBsum" id="8TGI"/>
<dbReference type="PDBsum" id="8TGJ"/>
<dbReference type="PDBsum" id="8TGK"/>
<dbReference type="PDBsum" id="8TGL"/>
<dbReference type="PDBsum" id="8TGM"/>
<dbReference type="PDBsum" id="8TGN"/>
<dbReference type="EMDB" id="EMD-41235"/>
<dbReference type="EMDB" id="EMD-41236"/>
<dbReference type="EMDB" id="EMD-41237"/>
<dbReference type="EMDB" id="EMD-41238"/>
<dbReference type="EMDB" id="EMD-41239"/>
<dbReference type="EMDB" id="EMD-41240"/>
<dbReference type="EMDB" id="EMD-41241"/>
<dbReference type="EMDB" id="EMD-41242"/>
<dbReference type="SMR" id="P54219"/>
<dbReference type="BioGRID" id="112458">
    <property type="interactions" value="153"/>
</dbReference>
<dbReference type="FunCoup" id="P54219">
    <property type="interactions" value="354"/>
</dbReference>
<dbReference type="IntAct" id="P54219">
    <property type="interactions" value="116"/>
</dbReference>
<dbReference type="STRING" id="9606.ENSP00000387549"/>
<dbReference type="BindingDB" id="P54219"/>
<dbReference type="ChEMBL" id="CHEMBL1838"/>
<dbReference type="DrugBank" id="DB01363">
    <property type="generic name" value="Ephedra sinica root"/>
</dbReference>
<dbReference type="DrugBank" id="DB01577">
    <property type="generic name" value="Metamfetamine"/>
</dbReference>
<dbReference type="DrugBank" id="DB01442">
    <property type="generic name" value="MMDA"/>
</dbReference>
<dbReference type="DrugBank" id="DB00368">
    <property type="generic name" value="Norepinephrine"/>
</dbReference>
<dbReference type="DrugBank" id="DB00206">
    <property type="generic name" value="Reserpine"/>
</dbReference>
<dbReference type="DrugCentral" id="P54219"/>
<dbReference type="GuidetoPHARMACOLOGY" id="1011"/>
<dbReference type="TCDB" id="2.A.1.2.12">
    <property type="family name" value="the major facilitator superfamily (mfs)"/>
</dbReference>
<dbReference type="GlyCosmos" id="P54219">
    <property type="glycosylation" value="3 sites, No reported glycans"/>
</dbReference>
<dbReference type="GlyGen" id="P54219">
    <property type="glycosylation" value="3 sites"/>
</dbReference>
<dbReference type="iPTMnet" id="P54219"/>
<dbReference type="PhosphoSitePlus" id="P54219"/>
<dbReference type="BioMuta" id="SLC18A1"/>
<dbReference type="DMDM" id="1722741"/>
<dbReference type="MassIVE" id="P54219"/>
<dbReference type="PaxDb" id="9606-ENSP00000387549"/>
<dbReference type="PeptideAtlas" id="P54219"/>
<dbReference type="ProteomicsDB" id="19679"/>
<dbReference type="ProteomicsDB" id="56654">
    <molecule id="P54219-1"/>
</dbReference>
<dbReference type="Antibodypedia" id="1514">
    <property type="antibodies" value="187 antibodies from 31 providers"/>
</dbReference>
<dbReference type="DNASU" id="6570"/>
<dbReference type="Ensembl" id="ENST00000265808.11">
    <molecule id="P54219-3"/>
    <property type="protein sequence ID" value="ENSP00000265808.7"/>
    <property type="gene ID" value="ENSG00000036565.15"/>
</dbReference>
<dbReference type="Ensembl" id="ENST00000276373.10">
    <molecule id="P54219-1"/>
    <property type="protein sequence ID" value="ENSP00000276373.5"/>
    <property type="gene ID" value="ENSG00000036565.15"/>
</dbReference>
<dbReference type="Ensembl" id="ENST00000381608.8">
    <molecule id="P54219-2"/>
    <property type="protein sequence ID" value="ENSP00000371021.4"/>
    <property type="gene ID" value="ENSG00000036565.15"/>
</dbReference>
<dbReference type="Ensembl" id="ENST00000437980.3">
    <molecule id="P54219-2"/>
    <property type="protein sequence ID" value="ENSP00000413361.1"/>
    <property type="gene ID" value="ENSG00000036565.15"/>
</dbReference>
<dbReference type="Ensembl" id="ENST00000440926.3">
    <molecule id="P54219-1"/>
    <property type="protein sequence ID" value="ENSP00000387549.1"/>
    <property type="gene ID" value="ENSG00000036565.15"/>
</dbReference>
<dbReference type="Ensembl" id="ENST00000519026.5">
    <molecule id="P54219-3"/>
    <property type="protein sequence ID" value="ENSP00000429664.1"/>
    <property type="gene ID" value="ENSG00000036565.15"/>
</dbReference>
<dbReference type="GeneID" id="6570"/>
<dbReference type="KEGG" id="hsa:6570"/>
<dbReference type="MANE-Select" id="ENST00000276373.10">
    <property type="protein sequence ID" value="ENSP00000276373.5"/>
    <property type="RefSeq nucleotide sequence ID" value="NM_003053.4"/>
    <property type="RefSeq protein sequence ID" value="NP_003044.1"/>
</dbReference>
<dbReference type="UCSC" id="uc003wzm.3">
    <molecule id="P54219-1"/>
    <property type="organism name" value="human"/>
</dbReference>
<dbReference type="AGR" id="HGNC:10934"/>
<dbReference type="CTD" id="6570"/>
<dbReference type="DisGeNET" id="6570"/>
<dbReference type="GeneCards" id="SLC18A1"/>
<dbReference type="HGNC" id="HGNC:10934">
    <property type="gene designation" value="SLC18A1"/>
</dbReference>
<dbReference type="HPA" id="ENSG00000036565">
    <property type="expression patterns" value="Tissue enriched (adrenal)"/>
</dbReference>
<dbReference type="MIM" id="193002">
    <property type="type" value="gene"/>
</dbReference>
<dbReference type="neXtProt" id="NX_P54219"/>
<dbReference type="OpenTargets" id="ENSG00000036565"/>
<dbReference type="PharmGKB" id="PA324"/>
<dbReference type="VEuPathDB" id="HostDB:ENSG00000036565"/>
<dbReference type="eggNOG" id="KOG3764">
    <property type="taxonomic scope" value="Eukaryota"/>
</dbReference>
<dbReference type="GeneTree" id="ENSGT00940000159352"/>
<dbReference type="HOGENOM" id="CLU_001265_10_9_1"/>
<dbReference type="InParanoid" id="P54219"/>
<dbReference type="OMA" id="FGWCVDR"/>
<dbReference type="OrthoDB" id="5086884at2759"/>
<dbReference type="PAN-GO" id="P54219">
    <property type="GO annotations" value="4 GO annotations based on evolutionary models"/>
</dbReference>
<dbReference type="PhylomeDB" id="P54219"/>
<dbReference type="TreeFam" id="TF313494"/>
<dbReference type="PathwayCommons" id="P54219"/>
<dbReference type="Reactome" id="R-HSA-442660">
    <property type="pathway name" value="Na+/Cl- dependent neurotransmitter transporters"/>
</dbReference>
<dbReference type="SignaLink" id="P54219"/>
<dbReference type="SIGNOR" id="P54219"/>
<dbReference type="BioGRID-ORCS" id="6570">
    <property type="hits" value="13 hits in 1157 CRISPR screens"/>
</dbReference>
<dbReference type="ChiTaRS" id="SLC18A1">
    <property type="organism name" value="human"/>
</dbReference>
<dbReference type="GenomeRNAi" id="6570"/>
<dbReference type="Pharos" id="P54219">
    <property type="development level" value="Tchem"/>
</dbReference>
<dbReference type="PRO" id="PR:P54219"/>
<dbReference type="Proteomes" id="UP000005640">
    <property type="component" value="Chromosome 8"/>
</dbReference>
<dbReference type="RNAct" id="P54219">
    <property type="molecule type" value="protein"/>
</dbReference>
<dbReference type="Bgee" id="ENSG00000036565">
    <property type="expression patterns" value="Expressed in male germ line stem cell (sensu Vertebrata) in testis and 56 other cell types or tissues"/>
</dbReference>
<dbReference type="ExpressionAtlas" id="P54219">
    <property type="expression patterns" value="baseline and differential"/>
</dbReference>
<dbReference type="GO" id="GO:0070083">
    <property type="term" value="C:clathrin-sculpted monoamine transport vesicle membrane"/>
    <property type="evidence" value="ECO:0000304"/>
    <property type="project" value="Reactome"/>
</dbReference>
<dbReference type="GO" id="GO:0005789">
    <property type="term" value="C:endoplasmic reticulum membrane"/>
    <property type="evidence" value="ECO:0000314"/>
    <property type="project" value="UniProtKB"/>
</dbReference>
<dbReference type="GO" id="GO:0098793">
    <property type="term" value="C:presynapse"/>
    <property type="evidence" value="ECO:0007669"/>
    <property type="project" value="GOC"/>
</dbReference>
<dbReference type="GO" id="GO:0030667">
    <property type="term" value="C:secretory granule membrane"/>
    <property type="evidence" value="ECO:0000314"/>
    <property type="project" value="UniProtKB"/>
</dbReference>
<dbReference type="GO" id="GO:0030672">
    <property type="term" value="C:synaptic vesicle membrane"/>
    <property type="evidence" value="ECO:0000318"/>
    <property type="project" value="GO_Central"/>
</dbReference>
<dbReference type="GO" id="GO:0043195">
    <property type="term" value="C:terminal bouton"/>
    <property type="evidence" value="ECO:0000318"/>
    <property type="project" value="GO_Central"/>
</dbReference>
<dbReference type="GO" id="GO:0008504">
    <property type="term" value="F:monoamine transmembrane transporter activity"/>
    <property type="evidence" value="ECO:0000304"/>
    <property type="project" value="UniProtKB"/>
</dbReference>
<dbReference type="GO" id="GO:0015311">
    <property type="term" value="F:monoamine:proton antiporter activity"/>
    <property type="evidence" value="ECO:0000314"/>
    <property type="project" value="UniProtKB"/>
</dbReference>
<dbReference type="GO" id="GO:0005335">
    <property type="term" value="F:serotonin:sodium:chloride symporter activity"/>
    <property type="evidence" value="ECO:0000318"/>
    <property type="project" value="GO_Central"/>
</dbReference>
<dbReference type="GO" id="GO:0042910">
    <property type="term" value="F:xenobiotic transmembrane transporter activity"/>
    <property type="evidence" value="ECO:0007669"/>
    <property type="project" value="InterPro"/>
</dbReference>
<dbReference type="GO" id="GO:0015842">
    <property type="term" value="P:aminergic neurotransmitter loading into synaptic vesicle"/>
    <property type="evidence" value="ECO:0000318"/>
    <property type="project" value="GO_Central"/>
</dbReference>
<dbReference type="GO" id="GO:0090494">
    <property type="term" value="P:dopamine uptake"/>
    <property type="evidence" value="ECO:0000314"/>
    <property type="project" value="UniProtKB"/>
</dbReference>
<dbReference type="GO" id="GO:0015844">
    <property type="term" value="P:monoamine transport"/>
    <property type="evidence" value="ECO:0000304"/>
    <property type="project" value="UniProtKB"/>
</dbReference>
<dbReference type="GO" id="GO:0051620">
    <property type="term" value="P:norepinephrine uptake"/>
    <property type="evidence" value="ECO:0000314"/>
    <property type="project" value="UniProtKB"/>
</dbReference>
<dbReference type="GO" id="GO:0051610">
    <property type="term" value="P:serotonin uptake"/>
    <property type="evidence" value="ECO:0000314"/>
    <property type="project" value="UniProtKB"/>
</dbReference>
<dbReference type="CDD" id="cd17384">
    <property type="entry name" value="MFS_SLC18A1_2_VAT1_2"/>
    <property type="match status" value="1"/>
</dbReference>
<dbReference type="FunFam" id="1.20.1250.20:FF:000083">
    <property type="entry name" value="synaptic vesicular amine transporter isoform X1"/>
    <property type="match status" value="1"/>
</dbReference>
<dbReference type="FunFam" id="1.20.1250.20:FF:000116">
    <property type="entry name" value="synaptic vesicular amine transporter isoform X2"/>
    <property type="match status" value="1"/>
</dbReference>
<dbReference type="Gene3D" id="1.20.1250.20">
    <property type="entry name" value="MFS general substrate transporter like domains"/>
    <property type="match status" value="2"/>
</dbReference>
<dbReference type="InterPro" id="IPR011701">
    <property type="entry name" value="MFS"/>
</dbReference>
<dbReference type="InterPro" id="IPR020846">
    <property type="entry name" value="MFS_dom"/>
</dbReference>
<dbReference type="InterPro" id="IPR036259">
    <property type="entry name" value="MFS_trans_sf"/>
</dbReference>
<dbReference type="InterPro" id="IPR050930">
    <property type="entry name" value="MFS_Vesicular_Transporter"/>
</dbReference>
<dbReference type="InterPro" id="IPR004734">
    <property type="entry name" value="Multidrug-R"/>
</dbReference>
<dbReference type="NCBIfam" id="TIGR00880">
    <property type="entry name" value="2_A_01_02"/>
    <property type="match status" value="1"/>
</dbReference>
<dbReference type="PANTHER" id="PTHR23506:SF31">
    <property type="entry name" value="CHROMAFFIN GRANULE AMINE TRANSPORTER"/>
    <property type="match status" value="1"/>
</dbReference>
<dbReference type="PANTHER" id="PTHR23506">
    <property type="entry name" value="GH10249P"/>
    <property type="match status" value="1"/>
</dbReference>
<dbReference type="Pfam" id="PF07690">
    <property type="entry name" value="MFS_1"/>
    <property type="match status" value="1"/>
</dbReference>
<dbReference type="SUPFAM" id="SSF103473">
    <property type="entry name" value="MFS general substrate transporter"/>
    <property type="match status" value="1"/>
</dbReference>
<dbReference type="PROSITE" id="PS50850">
    <property type="entry name" value="MFS"/>
    <property type="match status" value="1"/>
</dbReference>
<feature type="chain" id="PRO_0000127510" description="Chromaffin granule amine transporter">
    <location>
        <begin position="1"/>
        <end position="525"/>
    </location>
</feature>
<feature type="topological domain" description="Cytoplasmic" evidence="2">
    <location>
        <begin position="1"/>
        <end position="21"/>
    </location>
</feature>
<feature type="transmembrane region" description="Helical" evidence="2">
    <location>
        <begin position="22"/>
        <end position="42"/>
    </location>
</feature>
<feature type="topological domain" description="Lumenal, vesicle" evidence="2">
    <location>
        <begin position="43"/>
        <end position="138"/>
    </location>
</feature>
<feature type="transmembrane region" description="Helical" evidence="2">
    <location>
        <begin position="139"/>
        <end position="158"/>
    </location>
</feature>
<feature type="topological domain" description="Cytoplasmic" evidence="2">
    <location>
        <begin position="159"/>
        <end position="167"/>
    </location>
</feature>
<feature type="transmembrane region" description="Helical" evidence="2">
    <location>
        <begin position="168"/>
        <end position="188"/>
    </location>
</feature>
<feature type="topological domain" description="Lumenal, vesicle" evidence="2">
    <location>
        <begin position="189"/>
        <end position="197"/>
    </location>
</feature>
<feature type="transmembrane region" description="Helical" evidence="2">
    <location>
        <begin position="198"/>
        <end position="218"/>
    </location>
</feature>
<feature type="topological domain" description="Cytoplasmic" evidence="2">
    <location>
        <begin position="219"/>
        <end position="227"/>
    </location>
</feature>
<feature type="transmembrane region" description="Helical" evidence="2">
    <location>
        <begin position="228"/>
        <end position="250"/>
    </location>
</feature>
<feature type="topological domain" description="Lumenal, vesicle" evidence="2">
    <location>
        <begin position="251"/>
        <end position="256"/>
    </location>
</feature>
<feature type="transmembrane region" description="Helical" evidence="2">
    <location>
        <begin position="257"/>
        <end position="279"/>
    </location>
</feature>
<feature type="topological domain" description="Cytoplasmic" evidence="2">
    <location>
        <begin position="280"/>
        <end position="299"/>
    </location>
</feature>
<feature type="transmembrane region" description="Helical" evidence="2">
    <location>
        <begin position="300"/>
        <end position="319"/>
    </location>
</feature>
<feature type="topological domain" description="Lumenal, vesicle" evidence="2">
    <location>
        <begin position="320"/>
        <end position="335"/>
    </location>
</feature>
<feature type="transmembrane region" description="Helical" evidence="2">
    <location>
        <begin position="336"/>
        <end position="360"/>
    </location>
</feature>
<feature type="topological domain" description="Cytoplasmic" evidence="2">
    <location>
        <begin position="361"/>
        <end position="365"/>
    </location>
</feature>
<feature type="transmembrane region" description="Helical" evidence="2">
    <location>
        <begin position="366"/>
        <end position="386"/>
    </location>
</feature>
<feature type="topological domain" description="Lumenal, vesicle" evidence="2">
    <location>
        <begin position="387"/>
        <end position="397"/>
    </location>
</feature>
<feature type="transmembrane region" description="Helical" evidence="2">
    <location>
        <begin position="398"/>
        <end position="418"/>
    </location>
</feature>
<feature type="topological domain" description="Cytoplasmic" evidence="2">
    <location>
        <begin position="419"/>
        <end position="422"/>
    </location>
</feature>
<feature type="transmembrane region" description="Helical" evidence="2">
    <location>
        <begin position="423"/>
        <end position="443"/>
    </location>
</feature>
<feature type="topological domain" description="Lumenal, vesicle" evidence="2">
    <location>
        <begin position="444"/>
        <end position="448"/>
    </location>
</feature>
<feature type="transmembrane region" description="Helical" evidence="2">
    <location>
        <begin position="449"/>
        <end position="470"/>
    </location>
</feature>
<feature type="topological domain" description="Cytoplasmic" evidence="2">
    <location>
        <begin position="471"/>
        <end position="525"/>
    </location>
</feature>
<feature type="region of interest" description="Disordered" evidence="3">
    <location>
        <begin position="503"/>
        <end position="525"/>
    </location>
</feature>
<feature type="compositionally biased region" description="Acidic residues" evidence="3">
    <location>
        <begin position="513"/>
        <end position="525"/>
    </location>
</feature>
<feature type="glycosylation site" description="N-linked (GlcNAc...) asparagine" evidence="2">
    <location>
        <position position="58"/>
    </location>
</feature>
<feature type="glycosylation site" description="N-linked (GlcNAc...) asparagine" evidence="2">
    <location>
        <position position="87"/>
    </location>
</feature>
<feature type="glycosylation site" description="N-linked (GlcNAc...) asparagine" evidence="2">
    <location>
        <position position="104"/>
    </location>
</feature>
<feature type="splice variant" id="VSP_046304" description="In isoform 3." evidence="8">
    <location>
        <begin position="307"/>
        <end position="338"/>
    </location>
</feature>
<feature type="splice variant" id="VSP_046305" description="In isoform 2." evidence="9">
    <original>PSTGGAIVKAIGFPWLMVITGVINIVYAPLCYYLRSPPAKEEKLAILSQDCPMETRMYATQKPTKEFPLGEDSDEEPDHEE</original>
    <variation>YSESGLPHGDPDVCNPEAHEGISSGGGQ</variation>
    <location>
        <begin position="445"/>
        <end position="525"/>
    </location>
</feature>
<feature type="sequence variant" id="VAR_021856" description="In dbSNP:rs2270641." evidence="4 6">
    <original>T</original>
    <variation>P</variation>
    <location>
        <position position="4"/>
    </location>
</feature>
<feature type="sequence variant" id="VAR_087305" description="Found in a patient with bipolar disorder; has no significant effect on monoamine vesicular uptake; dbSNP:rs150204882." evidence="6">
    <original>Q</original>
    <variation>R</variation>
    <location>
        <position position="10"/>
    </location>
</feature>
<feature type="sequence variant" id="VAR_052002" description="In dbSNP:rs17092144.">
    <original>R</original>
    <variation>Q</variation>
    <location>
        <position position="11"/>
    </location>
</feature>
<feature type="sequence variant" id="VAR_024632" description="In dbSNP:rs17215815.">
    <original>A</original>
    <variation>V</variation>
    <location>
        <position position="74"/>
    </location>
</feature>
<feature type="sequence variant" id="VAR_029149" description="In dbSNP:rs17215822.">
    <original>F</original>
    <variation>C</variation>
    <location>
        <position position="82"/>
    </location>
</feature>
<feature type="sequence variant" id="VAR_024633" description="Found in patients with bipolar disorder; increases the vesicular uptake of noradrenaline and dopamine; dbSNP:rs17215801." evidence="6">
    <original>F</original>
    <variation>S</variation>
    <location>
        <position position="84"/>
    </location>
</feature>
<feature type="sequence variant" id="VAR_020033" description="In dbSNP:rs2270637." evidence="6">
    <original>S</original>
    <variation>T</variation>
    <location>
        <position position="98"/>
    </location>
</feature>
<feature type="sequence variant" id="VAR_024634" description="Found in a patient with bipolar disorder; decreases the vesicular uptake of noradrenaline, dopamine and serotonin; dbSNP:rs17222218." evidence="6">
    <original>A</original>
    <variation>P</variation>
    <location>
        <position position="101"/>
    </location>
</feature>
<feature type="sequence variant" id="VAR_012065" description="Decreases the vesicular uptake of noradrenaline, dopamine and serotonin; may predispose carriers to a increased cortical response to negative stimuli and reduced threat-related amygdala reactivity; dbSNP:rs1390938." evidence="4 6">
    <original>I</original>
    <variation>T</variation>
    <location>
        <position position="136"/>
    </location>
</feature>
<feature type="sequence variant" id="VAR_087306" description="Found in patients with bipolar disorder; decreases the vesicular uptake of noradrenaline, dopamine and serotonin; dbSNP:rs148468662." evidence="6">
    <original>R</original>
    <variation>L</variation>
    <location>
        <position position="138"/>
    </location>
</feature>
<feature type="sequence variant" id="VAR_029150" description="In dbSNP:rs17215808.">
    <original>G</original>
    <variation>R</variation>
    <location>
        <position position="140"/>
    </location>
</feature>
<feature type="sequence variant" id="VAR_024635" description="In dbSNP:rs17222092.">
    <original>I</original>
    <variation>M</variation>
    <location>
        <position position="164"/>
    </location>
</feature>
<feature type="sequence variant" id="VAR_029151" description="In dbSNP:rs17222120.">
    <original>I</original>
    <variation>T</variation>
    <location>
        <position position="202"/>
    </location>
</feature>
<feature type="sequence variant" id="VAR_024636" description="In dbSNP:rs17215759.">
    <original>V</original>
    <variation>I</variation>
    <location>
        <position position="249"/>
    </location>
</feature>
<feature type="sequence variant" id="VAR_024637" description="Decreases the vesicular uptake of noradrenaline and dopamine; dbSNP:rs17092104." evidence="6">
    <original>L</original>
    <variation>V</variation>
    <location>
        <position position="392"/>
    </location>
</feature>
<feature type="helix" evidence="13">
    <location>
        <begin position="22"/>
        <end position="40"/>
    </location>
</feature>
<feature type="turn" evidence="13">
    <location>
        <begin position="42"/>
        <end position="44"/>
    </location>
</feature>
<feature type="helix" evidence="13">
    <location>
        <begin position="45"/>
        <end position="50"/>
    </location>
</feature>
<feature type="helix" evidence="12">
    <location>
        <begin position="131"/>
        <end position="133"/>
    </location>
</feature>
<feature type="helix" evidence="13">
    <location>
        <begin position="135"/>
        <end position="164"/>
    </location>
</feature>
<feature type="helix" evidence="13">
    <location>
        <begin position="167"/>
        <end position="186"/>
    </location>
</feature>
<feature type="helix" evidence="13">
    <location>
        <begin position="190"/>
        <end position="218"/>
    </location>
</feature>
<feature type="helix" evidence="13">
    <location>
        <begin position="222"/>
        <end position="253"/>
    </location>
</feature>
<feature type="helix" evidence="13">
    <location>
        <begin position="257"/>
        <end position="277"/>
    </location>
</feature>
<feature type="helix" evidence="13">
    <location>
        <begin position="293"/>
        <end position="296"/>
    </location>
</feature>
<feature type="helix" evidence="13">
    <location>
        <begin position="300"/>
        <end position="330"/>
    </location>
</feature>
<feature type="helix" evidence="13">
    <location>
        <begin position="337"/>
        <end position="340"/>
    </location>
</feature>
<feature type="helix" evidence="13">
    <location>
        <begin position="343"/>
        <end position="363"/>
    </location>
</feature>
<feature type="helix" evidence="13">
    <location>
        <begin position="365"/>
        <end position="382"/>
    </location>
</feature>
<feature type="helix" evidence="13">
    <location>
        <begin position="383"/>
        <end position="385"/>
    </location>
</feature>
<feature type="helix" evidence="13">
    <location>
        <begin position="389"/>
        <end position="391"/>
    </location>
</feature>
<feature type="helix" evidence="13">
    <location>
        <begin position="393"/>
        <end position="420"/>
    </location>
</feature>
<feature type="helix" evidence="13">
    <location>
        <begin position="427"/>
        <end position="454"/>
    </location>
</feature>
<feature type="helix" evidence="13">
    <location>
        <begin position="457"/>
        <end position="471"/>
    </location>
</feature>
<feature type="helix" evidence="13">
    <location>
        <begin position="472"/>
        <end position="478"/>
    </location>
</feature>
<comment type="function">
    <molecule>Isoform 1</molecule>
    <text evidence="5 6 7">Electrogenic antiporter that exchanges one cationic monoamine with two intravesicular protons across the membrane of secretory and synaptic vesicles. Uses the electrochemical proton gradient established by the V-type proton-pump ATPase to accumulate high concentrations of monoamines inside the vesicles prior to their release via exocytosis. Transports catecholamines and indolamines with higher affinity for serotonin (PubMed:16326835, PubMed:23337945, PubMed:8643547). Regulates the transvesicular monoaminergic gradient that determines the quantal size. Mediates presynaptic monoaminergic vesicle transport in the amygdala and prefrontal brain regions related with emotion processing in response to environmental stimuli (PubMed:23337945).</text>
</comment>
<comment type="function">
    <molecule>Isoform 2</molecule>
    <text evidence="5">Unable to uptake serotonin.</text>
</comment>
<comment type="catalytic activity">
    <molecule>Isoform 1</molecule>
    <reaction evidence="5 6 7">
        <text>serotonin(in) + 2 H(+)(out) = serotonin(out) + 2 H(+)(in)</text>
        <dbReference type="Rhea" id="RHEA:73743"/>
        <dbReference type="ChEBI" id="CHEBI:15378"/>
        <dbReference type="ChEBI" id="CHEBI:350546"/>
    </reaction>
    <physiologicalReaction direction="left-to-right" evidence="11">
        <dbReference type="Rhea" id="RHEA:73744"/>
    </physiologicalReaction>
</comment>
<comment type="catalytic activity">
    <molecule>Isoform 1</molecule>
    <reaction evidence="6">
        <text>(R)-noradrenaline(in) + 2 H(+)(out) = (R)-noradrenaline(out) + 2 H(+)(in)</text>
        <dbReference type="Rhea" id="RHEA:73747"/>
        <dbReference type="ChEBI" id="CHEBI:15378"/>
        <dbReference type="ChEBI" id="CHEBI:72587"/>
    </reaction>
    <physiologicalReaction direction="left-to-right" evidence="11">
        <dbReference type="Rhea" id="RHEA:73748"/>
    </physiologicalReaction>
</comment>
<comment type="catalytic activity">
    <molecule>Isoform 1</molecule>
    <reaction evidence="6">
        <text>dopamine(in) + 2 H(+)(out) = dopamine(out) + 2 H(+)(in)</text>
        <dbReference type="Rhea" id="RHEA:73739"/>
        <dbReference type="ChEBI" id="CHEBI:15378"/>
        <dbReference type="ChEBI" id="CHEBI:59905"/>
    </reaction>
    <physiologicalReaction direction="left-to-right" evidence="11">
        <dbReference type="Rhea" id="RHEA:73740"/>
    </physiologicalReaction>
</comment>
<comment type="activity regulation">
    <molecule>Isoform 1</molecule>
    <text evidence="7">Strongly inhibited by reserpine. Also inhibited to a lesser extent by ketanserin and fenfluramine. Not significantly inhibited by tetrabenazine.</text>
</comment>
<comment type="biophysicochemical properties">
    <molecule>Isoform 1</molecule>
    <kinetics>
        <KM evidence="7">1.3 uM for serotonin</KM>
    </kinetics>
</comment>
<comment type="interaction">
    <interactant intactId="EBI-17595455">
        <id>P54219-3</id>
    </interactant>
    <interactant intactId="EBI-11522760">
        <id>Q6RW13-2</id>
        <label>AGTRAP</label>
    </interactant>
    <organismsDiffer>false</organismsDiffer>
    <experiments>3</experiments>
</comment>
<comment type="interaction">
    <interactant intactId="EBI-17595455">
        <id>P54219-3</id>
    </interactant>
    <interactant intactId="EBI-12109402">
        <id>Q86W74-2</id>
        <label>ANKRD46</label>
    </interactant>
    <organismsDiffer>false</organismsDiffer>
    <experiments>3</experiments>
</comment>
<comment type="interaction">
    <interactant intactId="EBI-17595455">
        <id>P54219-3</id>
    </interactant>
    <interactant intactId="EBI-4290634">
        <id>Q9BQE5</id>
        <label>APOL2</label>
    </interactant>
    <organismsDiffer>false</organismsDiffer>
    <experiments>3</experiments>
</comment>
<comment type="interaction">
    <interactant intactId="EBI-17595455">
        <id>P54219-3</id>
    </interactant>
    <interactant intactId="EBI-12244618">
        <id>Q6PL45-2</id>
        <label>BRICD5</label>
    </interactant>
    <organismsDiffer>false</organismsDiffer>
    <experiments>3</experiments>
</comment>
<comment type="interaction">
    <interactant intactId="EBI-17595455">
        <id>P54219-3</id>
    </interactant>
    <interactant intactId="EBI-12822627">
        <id>O14523</id>
        <label>C2CD2L</label>
    </interactant>
    <organismsDiffer>false</organismsDiffer>
    <experiments>3</experiments>
</comment>
<comment type="interaction">
    <interactant intactId="EBI-17595455">
        <id>P54219-3</id>
    </interactant>
    <interactant intactId="EBI-2873970">
        <id>P13236</id>
        <label>CCL4</label>
    </interactant>
    <organismsDiffer>false</organismsDiffer>
    <experiments>3</experiments>
</comment>
<comment type="interaction">
    <interactant intactId="EBI-17595455">
        <id>P54219-3</id>
    </interactant>
    <interactant intactId="EBI-10271156">
        <id>Q8NHW4</id>
        <label>CCL4L2</label>
    </interactant>
    <organismsDiffer>false</organismsDiffer>
    <experiments>3</experiments>
</comment>
<comment type="interaction">
    <interactant intactId="EBI-17595455">
        <id>P54219-3</id>
    </interactant>
    <interactant intactId="EBI-12172273">
        <id>O95406</id>
        <label>CNIH1</label>
    </interactant>
    <organismsDiffer>false</organismsDiffer>
    <experiments>3</experiments>
</comment>
<comment type="interaction">
    <interactant intactId="EBI-17595455">
        <id>P54219-3</id>
    </interactant>
    <interactant intactId="EBI-12211159">
        <id>P29400-2</id>
        <label>COL4A5</label>
    </interactant>
    <organismsDiffer>false</organismsDiffer>
    <experiments>3</experiments>
</comment>
<comment type="interaction">
    <interactant intactId="EBI-17595455">
        <id>P54219-3</id>
    </interactant>
    <interactant intactId="EBI-717654">
        <id>O14569</id>
        <label>CYB561D2</label>
    </interactant>
    <organismsDiffer>false</organismsDiffer>
    <experiments>3</experiments>
</comment>
<comment type="interaction">
    <interactant intactId="EBI-17595455">
        <id>P54219-3</id>
    </interactant>
    <interactant intactId="EBI-2876774">
        <id>Q92520</id>
        <label>FAM3C</label>
    </interactant>
    <organismsDiffer>false</organismsDiffer>
    <experiments>3</experiments>
</comment>
<comment type="interaction">
    <interactant intactId="EBI-17595455">
        <id>P54219-3</id>
    </interactant>
    <interactant intactId="EBI-12175685">
        <id>Q14802-3</id>
        <label>FXYD3</label>
    </interactant>
    <organismsDiffer>false</organismsDiffer>
    <experiments>3</experiments>
</comment>
<comment type="interaction">
    <interactant intactId="EBI-17595455">
        <id>P54219-3</id>
    </interactant>
    <interactant intactId="EBI-11991950">
        <id>Q8WWP7</id>
        <label>GIMAP1</label>
    </interactant>
    <organismsDiffer>false</organismsDiffer>
    <experiments>3</experiments>
</comment>
<comment type="interaction">
    <interactant intactId="EBI-17595455">
        <id>P54219-3</id>
    </interactant>
    <interactant intactId="EBI-3905204">
        <id>P29033</id>
        <label>GJB2</label>
    </interactant>
    <organismsDiffer>false</organismsDiffer>
    <experiments>3</experiments>
</comment>
<comment type="interaction">
    <interactant intactId="EBI-17595455">
        <id>P54219-3</id>
    </interactant>
    <interactant intactId="EBI-11955647">
        <id>Q8TDV0</id>
        <label>GPR151</label>
    </interactant>
    <organismsDiffer>false</organismsDiffer>
    <experiments>3</experiments>
</comment>
<comment type="interaction">
    <interactant intactId="EBI-17595455">
        <id>P54219-3</id>
    </interactant>
    <interactant intactId="EBI-8070286">
        <id>O43561-2</id>
        <label>LAT</label>
    </interactant>
    <organismsDiffer>false</organismsDiffer>
    <experiments>3</experiments>
</comment>
<comment type="interaction">
    <interactant intactId="EBI-17595455">
        <id>P54219-3</id>
    </interactant>
    <interactant intactId="EBI-750078">
        <id>Q13021</id>
        <label>MALL</label>
    </interactant>
    <organismsDiffer>false</organismsDiffer>
    <experiments>3</experiments>
</comment>
<comment type="interaction">
    <interactant intactId="EBI-17595455">
        <id>P54219-3</id>
    </interactant>
    <interactant intactId="EBI-2858252">
        <id>Q6ZSS7</id>
        <label>MFSD6</label>
    </interactant>
    <organismsDiffer>false</organismsDiffer>
    <experiments>3</experiments>
</comment>
<comment type="interaction">
    <interactant intactId="EBI-17595455">
        <id>P54219-3</id>
    </interactant>
    <interactant intactId="EBI-2829774">
        <id>O43451</id>
        <label>MGAM</label>
    </interactant>
    <organismsDiffer>false</organismsDiffer>
    <experiments>3</experiments>
</comment>
<comment type="interaction">
    <interactant intactId="EBI-17595455">
        <id>P54219-3</id>
    </interactant>
    <interactant intactId="EBI-8449636">
        <id>P30301</id>
        <label>MIP</label>
    </interactant>
    <organismsDiffer>false</organismsDiffer>
    <experiments>3</experiments>
</comment>
<comment type="interaction">
    <interactant intactId="EBI-17595455">
        <id>P54219-3</id>
    </interactant>
    <interactant intactId="EBI-2808234">
        <id>P11836</id>
        <label>MS4A1</label>
    </interactant>
    <organismsDiffer>false</organismsDiffer>
    <experiments>3</experiments>
</comment>
<comment type="interaction">
    <interactant intactId="EBI-17595455">
        <id>P54219-3</id>
    </interactant>
    <interactant intactId="EBI-12070086">
        <id>Q5J8X5</id>
        <label>MS4A13</label>
    </interactant>
    <organismsDiffer>false</organismsDiffer>
    <experiments>3</experiments>
</comment>
<comment type="interaction">
    <interactant intactId="EBI-17595455">
        <id>P54219-3</id>
    </interactant>
    <interactant intactId="EBI-721517">
        <id>Q99519</id>
        <label>NEU1</label>
    </interactant>
    <organismsDiffer>false</organismsDiffer>
    <experiments>3</experiments>
</comment>
<comment type="interaction">
    <interactant intactId="EBI-17595455">
        <id>P54219-3</id>
    </interactant>
    <interactant intactId="EBI-10262547">
        <id>Q8IXM6</id>
        <label>NRM</label>
    </interactant>
    <organismsDiffer>false</organismsDiffer>
    <experiments>3</experiments>
</comment>
<comment type="interaction">
    <interactant intactId="EBI-17595455">
        <id>P54219-3</id>
    </interactant>
    <interactant intactId="EBI-2804156">
        <id>Q6UX06</id>
        <label>OLFM4</label>
    </interactant>
    <organismsDiffer>false</organismsDiffer>
    <experiments>3</experiments>
</comment>
<comment type="interaction">
    <interactant intactId="EBI-17595455">
        <id>P54219-3</id>
    </interactant>
    <interactant intactId="EBI-1054848">
        <id>Q9P0S3</id>
        <label>ORMDL1</label>
    </interactant>
    <organismsDiffer>false</organismsDiffer>
    <experiments>3</experiments>
</comment>
<comment type="interaction">
    <interactant intactId="EBI-17595455">
        <id>P54219-3</id>
    </interactant>
    <interactant intactId="EBI-981985">
        <id>Q9Y5Y5</id>
        <label>PEX16</label>
    </interactant>
    <organismsDiffer>false</organismsDiffer>
    <experiments>3</experiments>
</comment>
<comment type="interaction">
    <interactant intactId="EBI-17595455">
        <id>P54219-3</id>
    </interactant>
    <interactant intactId="EBI-12188331">
        <id>P60201-2</id>
        <label>PLP1</label>
    </interactant>
    <organismsDiffer>false</organismsDiffer>
    <experiments>3</experiments>
</comment>
<comment type="interaction">
    <interactant intactId="EBI-17595455">
        <id>P54219-3</id>
    </interactant>
    <interactant intactId="EBI-608347">
        <id>Q04941</id>
        <label>PLP2</label>
    </interactant>
    <organismsDiffer>false</organismsDiffer>
    <experiments>3</experiments>
</comment>
<comment type="interaction">
    <interactant intactId="EBI-17595455">
        <id>P54219-3</id>
    </interactant>
    <interactant intactId="EBI-2845982">
        <id>Q01453</id>
        <label>PMP22</label>
    </interactant>
    <organismsDiffer>false</organismsDiffer>
    <experiments>3</experiments>
</comment>
<comment type="interaction">
    <interactant intactId="EBI-17595455">
        <id>P54219-3</id>
    </interactant>
    <interactant intactId="EBI-8652812">
        <id>P54315</id>
        <label>PNLIPRP1</label>
    </interactant>
    <organismsDiffer>false</organismsDiffer>
    <experiments>3</experiments>
</comment>
<comment type="interaction">
    <interactant intactId="EBI-17595455">
        <id>P54219-3</id>
    </interactant>
    <interactant intactId="EBI-14210385">
        <id>Q59EV6</id>
        <label>PPGB</label>
    </interactant>
    <organismsDiffer>false</organismsDiffer>
    <experiments>3</experiments>
</comment>
<comment type="interaction">
    <interactant intactId="EBI-17595455">
        <id>P54219-3</id>
    </interactant>
    <interactant intactId="EBI-1052363">
        <id>Q9NS64</id>
        <label>RPRM</label>
    </interactant>
    <organismsDiffer>false</organismsDiffer>
    <experiments>3</experiments>
</comment>
<comment type="interaction">
    <interactant intactId="EBI-17595455">
        <id>P54219-3</id>
    </interactant>
    <interactant intactId="EBI-8644112">
        <id>Q9BRI3</id>
        <label>SLC30A2</label>
    </interactant>
    <organismsDiffer>false</organismsDiffer>
    <experiments>3</experiments>
</comment>
<comment type="interaction">
    <interactant intactId="EBI-17595455">
        <id>P54219-3</id>
    </interactant>
    <interactant intactId="EBI-10262251">
        <id>Q8IWU4</id>
        <label>SLC30A8</label>
    </interactant>
    <organismsDiffer>false</organismsDiffer>
    <experiments>3</experiments>
</comment>
<comment type="interaction">
    <interactant intactId="EBI-17595455">
        <id>P54219-3</id>
    </interactant>
    <interactant intactId="EBI-10281213">
        <id>Q969S0</id>
        <label>SLC35B4</label>
    </interactant>
    <organismsDiffer>false</organismsDiffer>
    <experiments>3</experiments>
</comment>
<comment type="interaction">
    <interactant intactId="EBI-17595455">
        <id>P54219-3</id>
    </interactant>
    <interactant intactId="EBI-13311257">
        <id>Q2M3R5</id>
        <label>SLC35G1</label>
    </interactant>
    <organismsDiffer>false</organismsDiffer>
    <experiments>3</experiments>
</comment>
<comment type="interaction">
    <interactant intactId="EBI-17595455">
        <id>P54219-3</id>
    </interactant>
    <interactant intactId="EBI-10314552">
        <id>Q9NVC3</id>
        <label>SLC38A7</label>
    </interactant>
    <organismsDiffer>false</organismsDiffer>
    <experiments>3</experiments>
</comment>
<comment type="interaction">
    <interactant intactId="EBI-17595455">
        <id>P54219-3</id>
    </interactant>
    <interactant intactId="EBI-12898013">
        <id>Q9NP94</id>
        <label>SLC39A2</label>
    </interactant>
    <organismsDiffer>false</organismsDiffer>
    <experiments>3</experiments>
</comment>
<comment type="interaction">
    <interactant intactId="EBI-17595455">
        <id>P54219-3</id>
    </interactant>
    <interactant intactId="EBI-8640191">
        <id>Q9NRQ5</id>
        <label>SMCO4</label>
    </interactant>
    <organismsDiffer>false</organismsDiffer>
    <experiments>3</experiments>
</comment>
<comment type="interaction">
    <interactant intactId="EBI-17595455">
        <id>P54219-3</id>
    </interactant>
    <interactant intactId="EBI-12188413">
        <id>B2RUZ4</id>
        <label>SMIM1</label>
    </interactant>
    <organismsDiffer>false</organismsDiffer>
    <experiments>3</experiments>
</comment>
<comment type="interaction">
    <interactant intactId="EBI-17595455">
        <id>P54219-3</id>
    </interactant>
    <interactant intactId="EBI-11956649">
        <id>P32856-2</id>
        <label>STX2</label>
    </interactant>
    <organismsDiffer>false</organismsDiffer>
    <experiments>3</experiments>
</comment>
<comment type="interaction">
    <interactant intactId="EBI-17595455">
        <id>P54219-3</id>
    </interactant>
    <interactant intactId="EBI-727240">
        <id>Q9UNK0</id>
        <label>STX8</label>
    </interactant>
    <organismsDiffer>false</organismsDiffer>
    <experiments>3</experiments>
</comment>
<comment type="interaction">
    <interactant intactId="EBI-17595455">
        <id>P54219-3</id>
    </interactant>
    <interactant intactId="EBI-355727">
        <id>P02786</id>
        <label>TFRC</label>
    </interactant>
    <organismsDiffer>false</organismsDiffer>
    <experiments>3</experiments>
</comment>
<comment type="interaction">
    <interactant intactId="EBI-17595455">
        <id>P54219-3</id>
    </interactant>
    <interactant intactId="EBI-10171534">
        <id>A0PK00</id>
        <label>TMEM120B</label>
    </interactant>
    <organismsDiffer>false</organismsDiffer>
    <experiments>3</experiments>
</comment>
<comment type="interaction">
    <interactant intactId="EBI-17595455">
        <id>P54219-3</id>
    </interactant>
    <interactant intactId="EBI-10694905">
        <id>Q5BJH2-2</id>
        <label>TMEM128</label>
    </interactant>
    <organismsDiffer>false</organismsDiffer>
    <experiments>3</experiments>
</comment>
<comment type="interaction">
    <interactant intactId="EBI-17595455">
        <id>P54219-3</id>
    </interactant>
    <interactant intactId="EBI-2800360">
        <id>Q9Y6G1</id>
        <label>TMEM14A</label>
    </interactant>
    <organismsDiffer>false</organismsDiffer>
    <experiments>3</experiments>
</comment>
<comment type="interaction">
    <interactant intactId="EBI-17595455">
        <id>P54219-3</id>
    </interactant>
    <interactant intactId="EBI-8638294">
        <id>Q9NUH8</id>
        <label>TMEM14B</label>
    </interactant>
    <organismsDiffer>false</organismsDiffer>
    <experiments>3</experiments>
</comment>
<comment type="interaction">
    <interactant intactId="EBI-17595455">
        <id>P54219-3</id>
    </interactant>
    <interactant intactId="EBI-12274070">
        <id>Q969S6</id>
        <label>TMEM203</label>
    </interactant>
    <organismsDiffer>false</organismsDiffer>
    <experiments>3</experiments>
</comment>
<comment type="interaction">
    <interactant intactId="EBI-17595455">
        <id>P54219-3</id>
    </interactant>
    <interactant intactId="EBI-10173151">
        <id>A2RU14</id>
        <label>TMEM218</label>
    </interactant>
    <organismsDiffer>false</organismsDiffer>
    <experiments>3</experiments>
</comment>
<comment type="interaction">
    <interactant intactId="EBI-17595455">
        <id>P54219-3</id>
    </interactant>
    <interactant intactId="EBI-11528917">
        <id>Q8WW34-2</id>
        <label>TMEM239</label>
    </interactant>
    <organismsDiffer>false</organismsDiffer>
    <experiments>3</experiments>
</comment>
<comment type="interaction">
    <interactant intactId="EBI-17595455">
        <id>P54219-3</id>
    </interactant>
    <interactant intactId="EBI-12038591">
        <id>Q69YG0</id>
        <label>TMEM42</label>
    </interactant>
    <organismsDiffer>false</organismsDiffer>
    <experiments>3</experiments>
</comment>
<comment type="interaction">
    <interactant intactId="EBI-17595455">
        <id>P54219-3</id>
    </interactant>
    <interactant intactId="EBI-2852148">
        <id>Q9H2L4</id>
        <label>TMEM60</label>
    </interactant>
    <organismsDiffer>false</organismsDiffer>
    <experiments>3</experiments>
</comment>
<comment type="interaction">
    <interactant intactId="EBI-17595455">
        <id>P54219-3</id>
    </interactant>
    <interactant intactId="EBI-6656213">
        <id>Q6PI78</id>
        <label>TMEM65</label>
    </interactant>
    <organismsDiffer>false</organismsDiffer>
    <experiments>3</experiments>
</comment>
<comment type="interaction">
    <interactant intactId="EBI-17595455">
        <id>P54219-3</id>
    </interactant>
    <interactant intactId="EBI-12015604">
        <id>Q8N2M4</id>
        <label>TMEM86A</label>
    </interactant>
    <organismsDiffer>false</organismsDiffer>
    <experiments>3</experiments>
</comment>
<comment type="interaction">
    <interactant intactId="EBI-17595455">
        <id>P54219-3</id>
    </interactant>
    <interactant intactId="EBI-10191195">
        <id>O95183</id>
        <label>VAMP5</label>
    </interactant>
    <organismsDiffer>false</organismsDiffer>
    <experiments>3</experiments>
</comment>
<comment type="interaction">
    <interactant intactId="EBI-17595455">
        <id>P54219-3</id>
    </interactant>
    <interactant intactId="EBI-751253">
        <id>Q9BSR8</id>
        <label>YIPF4</label>
    </interactant>
    <organismsDiffer>false</organismsDiffer>
    <experiments>3</experiments>
</comment>
<comment type="interaction">
    <interactant intactId="EBI-17595455">
        <id>P54219-3</id>
    </interactant>
    <interactant intactId="EBI-751210">
        <id>Q96EC8</id>
        <label>YIPF6</label>
    </interactant>
    <organismsDiffer>false</organismsDiffer>
    <experiments>3</experiments>
</comment>
<comment type="subcellular location">
    <subcellularLocation>
        <location evidence="7">Cytoplasmic vesicle</location>
        <location evidence="7">Secretory vesicle membrane</location>
        <topology evidence="2">Multi-pass membrane protein</topology>
    </subcellularLocation>
    <subcellularLocation>
        <location evidence="1">Cytoplasmic vesicle</location>
        <location evidence="1">Secretory vesicle</location>
        <location evidence="1">Synaptic vesicle membrane</location>
        <topology evidence="2">Multi-pass membrane protein</topology>
    </subcellularLocation>
</comment>
<comment type="subcellular location">
    <molecule>Isoform 1</molecule>
    <subcellularLocation>
        <location evidence="5">Cytoplasmic vesicle</location>
        <location evidence="5">Secretory vesicle membrane</location>
        <topology evidence="2">Multi-pass membrane protein</topology>
    </subcellularLocation>
</comment>
<comment type="subcellular location">
    <molecule>Isoform 2</molecule>
    <subcellularLocation>
        <location evidence="5">Endoplasmic reticulum membrane</location>
        <topology evidence="2">Multi-pass membrane protein</topology>
    </subcellularLocation>
</comment>
<comment type="alternative products">
    <event type="alternative splicing"/>
    <isoform>
        <id>P54219-1</id>
        <name>1</name>
        <sequence type="displayed"/>
    </isoform>
    <isoform>
        <id>P54219-2</id>
        <name>2</name>
        <name>VMAT1delta15</name>
        <sequence type="described" ref="VSP_046305"/>
    </isoform>
    <isoform>
        <id>P54219-3</id>
        <name>3</name>
        <sequence type="described" ref="VSP_046304"/>
    </isoform>
</comment>
<comment type="tissue specificity">
    <text evidence="6 7">Expressed primarily in neuroendocrine tissues. Highly expressed in chromaffin cells of the adrenal medulla (at protein level). Detected in peripheral sympathetic ganglia (at protein level). Found in some paracrine cells in stomach and duodenum (at protein level) (PubMed:8643547). Expressed in substantia nigra (PubMed:23337945).</text>
</comment>
<comment type="tissue specificity">
    <molecule>Isoform 1</molecule>
    <text evidence="5">Expressed in gastrointestinal tract.</text>
</comment>
<comment type="tissue specificity">
    <molecule>Isoform 2</molecule>
    <text evidence="5">Expressed in gastrointestinal tract.</text>
</comment>
<comment type="similarity">
    <text evidence="10">Belongs to the major facilitator superfamily. Vesicular transporter family.</text>
</comment>
<organism>
    <name type="scientific">Homo sapiens</name>
    <name type="common">Human</name>
    <dbReference type="NCBI Taxonomy" id="9606"/>
    <lineage>
        <taxon>Eukaryota</taxon>
        <taxon>Metazoa</taxon>
        <taxon>Chordata</taxon>
        <taxon>Craniata</taxon>
        <taxon>Vertebrata</taxon>
        <taxon>Euteleostomi</taxon>
        <taxon>Mammalia</taxon>
        <taxon>Eutheria</taxon>
        <taxon>Euarchontoglires</taxon>
        <taxon>Primates</taxon>
        <taxon>Haplorrhini</taxon>
        <taxon>Catarrhini</taxon>
        <taxon>Hominidae</taxon>
        <taxon>Homo</taxon>
    </lineage>
</organism>
<evidence type="ECO:0000250" key="1">
    <source>
        <dbReference type="UniProtKB" id="Q8R090"/>
    </source>
</evidence>
<evidence type="ECO:0000255" key="2"/>
<evidence type="ECO:0000256" key="3">
    <source>
        <dbReference type="SAM" id="MobiDB-lite"/>
    </source>
</evidence>
<evidence type="ECO:0000269" key="4">
    <source>
    </source>
</evidence>
<evidence type="ECO:0000269" key="5">
    <source>
    </source>
</evidence>
<evidence type="ECO:0000269" key="6">
    <source>
    </source>
</evidence>
<evidence type="ECO:0000269" key="7">
    <source>
    </source>
</evidence>
<evidence type="ECO:0000303" key="8">
    <source>
    </source>
</evidence>
<evidence type="ECO:0000303" key="9">
    <source>
    </source>
</evidence>
<evidence type="ECO:0000305" key="10"/>
<evidence type="ECO:0000305" key="11">
    <source>
    </source>
</evidence>
<evidence type="ECO:0007829" key="12">
    <source>
        <dbReference type="PDB" id="8TGJ"/>
    </source>
</evidence>
<evidence type="ECO:0007829" key="13">
    <source>
        <dbReference type="PDB" id="8TGN"/>
    </source>
</evidence>